<dbReference type="EMBL" id="GU292909">
    <property type="protein sequence ID" value="ADB56725.1"/>
    <property type="molecule type" value="mRNA"/>
</dbReference>
<dbReference type="PDB" id="1NIY">
    <property type="method" value="NMR"/>
    <property type="chains" value="A=50-84"/>
</dbReference>
<dbReference type="PDB" id="1RYG">
    <property type="method" value="NMR"/>
    <property type="chains" value="A=50-84"/>
</dbReference>
<dbReference type="PDB" id="1RYV">
    <property type="method" value="NMR"/>
    <property type="chains" value="A=50-84"/>
</dbReference>
<dbReference type="PDBsum" id="1NIY"/>
<dbReference type="PDBsum" id="1RYG"/>
<dbReference type="PDBsum" id="1RYV"/>
<dbReference type="BMRB" id="D2Y232"/>
<dbReference type="SMR" id="D2Y232"/>
<dbReference type="ArachnoServer" id="AS000340">
    <property type="toxin name" value="mu-theraphotoxin-Hhn1b"/>
</dbReference>
<dbReference type="EvolutionaryTrace" id="D2Y232"/>
<dbReference type="GO" id="GO:0005576">
    <property type="term" value="C:extracellular region"/>
    <property type="evidence" value="ECO:0007669"/>
    <property type="project" value="UniProtKB-SubCell"/>
</dbReference>
<dbReference type="GO" id="GO:0044231">
    <property type="term" value="C:host cell presynaptic membrane"/>
    <property type="evidence" value="ECO:0007669"/>
    <property type="project" value="UniProtKB-KW"/>
</dbReference>
<dbReference type="GO" id="GO:0008200">
    <property type="term" value="F:ion channel inhibitor activity"/>
    <property type="evidence" value="ECO:0007669"/>
    <property type="project" value="InterPro"/>
</dbReference>
<dbReference type="GO" id="GO:0017080">
    <property type="term" value="F:sodium channel regulator activity"/>
    <property type="evidence" value="ECO:0007669"/>
    <property type="project" value="UniProtKB-KW"/>
</dbReference>
<dbReference type="GO" id="GO:0090729">
    <property type="term" value="F:toxin activity"/>
    <property type="evidence" value="ECO:0007669"/>
    <property type="project" value="UniProtKB-KW"/>
</dbReference>
<dbReference type="InterPro" id="IPR011696">
    <property type="entry name" value="Huwentoxin-1"/>
</dbReference>
<dbReference type="InterPro" id="IPR013140">
    <property type="entry name" value="Huwentoxin_CS1"/>
</dbReference>
<dbReference type="Pfam" id="PF07740">
    <property type="entry name" value="Toxin_12"/>
    <property type="match status" value="1"/>
</dbReference>
<dbReference type="SUPFAM" id="SSF57059">
    <property type="entry name" value="omega toxin-like"/>
    <property type="match status" value="1"/>
</dbReference>
<dbReference type="PROSITE" id="PS60021">
    <property type="entry name" value="HWTX_1"/>
    <property type="match status" value="1"/>
</dbReference>
<feature type="signal peptide" evidence="1">
    <location>
        <begin position="1"/>
        <end position="21"/>
    </location>
</feature>
<feature type="propeptide" id="PRO_0000400566" evidence="3 4 7">
    <location>
        <begin position="22"/>
        <end position="49"/>
    </location>
</feature>
<feature type="peptide" id="PRO_0000400567" description="Mu-theraphotoxin-Hhn1b 1" evidence="3 4 7">
    <location>
        <begin position="50"/>
        <end position="84"/>
    </location>
</feature>
<feature type="site" description="Interacts with channel">
    <location>
        <position position="76"/>
    </location>
</feature>
<feature type="site" description="Interacts with channel">
    <location>
        <position position="78"/>
    </location>
</feature>
<feature type="modified residue" description="Isoleucine amide" evidence="4 5">
    <location>
        <position position="84"/>
    </location>
</feature>
<feature type="disulfide bond" evidence="5 18 19 20">
    <location>
        <begin position="51"/>
        <end position="66"/>
    </location>
</feature>
<feature type="disulfide bond" evidence="5 18 19 20">
    <location>
        <begin position="58"/>
        <end position="73"/>
    </location>
</feature>
<feature type="disulfide bond" evidence="5 18 19 20">
    <location>
        <begin position="65"/>
        <end position="80"/>
    </location>
</feature>
<feature type="mutagenesis site" description="No important change in activity." evidence="5 6">
    <original>S</original>
    <variation>A</variation>
    <location>
        <position position="61"/>
    </location>
</feature>
<feature type="mutagenesis site" description="No important change in activity." evidence="5">
    <original>R</original>
    <variation>A</variation>
    <location>
        <position position="75"/>
    </location>
</feature>
<feature type="mutagenesis site" description="Important reduction in activity, without change of toxin conformation." evidence="5">
    <original>K</original>
    <variation>A</variation>
    <location>
        <position position="76"/>
    </location>
</feature>
<feature type="mutagenesis site" description="Important reduction in activity, without change of toxin conformation." evidence="5 6">
    <original>R</original>
    <variation>A</variation>
    <location>
        <position position="78"/>
    </location>
</feature>
<feature type="sequence conflict" description="In Ref. 3; AA sequence." evidence="17" ref="3">
    <original>SNDQ</original>
    <variation>DQSN</variation>
    <location>
        <begin position="61"/>
        <end position="64"/>
    </location>
</feature>
<feature type="turn" evidence="21">
    <location>
        <begin position="60"/>
        <end position="62"/>
    </location>
</feature>
<feature type="turn" evidence="21">
    <location>
        <begin position="67"/>
        <end position="70"/>
    </location>
</feature>
<feature type="strand" evidence="21">
    <location>
        <begin position="71"/>
        <end position="73"/>
    </location>
</feature>
<feature type="strand" evidence="21">
    <location>
        <begin position="75"/>
        <end position="77"/>
    </location>
</feature>
<feature type="strand" evidence="21">
    <location>
        <begin position="79"/>
        <end position="82"/>
    </location>
</feature>
<name>H4A01_CYRHA</name>
<organism>
    <name type="scientific">Cyriopagopus hainanus</name>
    <name type="common">Chinese bird spider</name>
    <name type="synonym">Haplopelma hainanum</name>
    <dbReference type="NCBI Taxonomy" id="209901"/>
    <lineage>
        <taxon>Eukaryota</taxon>
        <taxon>Metazoa</taxon>
        <taxon>Ecdysozoa</taxon>
        <taxon>Arthropoda</taxon>
        <taxon>Chelicerata</taxon>
        <taxon>Arachnida</taxon>
        <taxon>Araneae</taxon>
        <taxon>Mygalomorphae</taxon>
        <taxon>Theraphosidae</taxon>
        <taxon>Haplopelma</taxon>
    </lineage>
</organism>
<keyword id="KW-0002">3D-structure</keyword>
<keyword id="KW-0027">Amidation</keyword>
<keyword id="KW-0903">Direct protein sequencing</keyword>
<keyword id="KW-1015">Disulfide bond</keyword>
<keyword id="KW-0872">Ion channel impairing toxin</keyword>
<keyword id="KW-0960">Knottin</keyword>
<keyword id="KW-0528">Neurotoxin</keyword>
<keyword id="KW-0638">Presynaptic neurotoxin</keyword>
<keyword id="KW-0964">Secreted</keyword>
<keyword id="KW-0732">Signal</keyword>
<keyword id="KW-0800">Toxin</keyword>
<keyword id="KW-0738">Voltage-gated sodium channel impairing toxin</keyword>
<reference key="1">
    <citation type="journal article" date="2010" name="J. Proteome Res.">
        <title>Molecular diversification of peptide toxins from the tarantula Haplopelma hainanum (Ornithoctonus hainana) venom based on transcriptomic, peptidomic, and genomic analyses.</title>
        <authorList>
            <person name="Tang X."/>
            <person name="Zhang Y."/>
            <person name="Hu W."/>
            <person name="Xu D."/>
            <person name="Tao H."/>
            <person name="Yang X."/>
            <person name="Li Y."/>
            <person name="Jiang L."/>
            <person name="Liang S."/>
        </authorList>
    </citation>
    <scope>NUCLEOTIDE SEQUENCE [LARGE SCALE MRNA]</scope>
    <scope>PROTEIN SEQUENCE OF 50-84</scope>
    <scope>IDENTIFICATION BY MASS SPECTROMETRY</scope>
    <source>
        <tissue>Venom</tissue>
        <tissue>Venom gland</tissue>
    </source>
</reference>
<reference key="2">
    <citation type="journal article" date="2003" name="Cell. Mol. Life Sci.">
        <title>Isolation and characterization of hainantoxin-IV, a novel antagonist of tetrodotoxin-sensitive sodium channels from the Chinese bird spider Selenocosmia hainana.</title>
        <authorList>
            <person name="Liu Z.-H."/>
            <person name="Dai J."/>
            <person name="Chen Z."/>
            <person name="Hu W."/>
            <person name="Xiao Y."/>
            <person name="Liang S.-P."/>
        </authorList>
    </citation>
    <scope>PROTEIN SEQUENCE OF 50-84</scope>
    <scope>FUNCTION</scope>
    <scope>TOXIN TARGET</scope>
    <scope>SUBCELLULAR LOCATION</scope>
    <scope>TISSUE SPECIFICITY</scope>
    <scope>MASS SPECTROMETRY</scope>
    <scope>TOXIC DOSE</scope>
    <scope>DISULFIDE BONDS</scope>
</reference>
<reference key="3">
    <citation type="journal article" date="2003" name="Eur. J. Pharmacol.">
        <title>Inhibition of neuronal tetrodotoxin-sensitive Na+ channels by two spider toxins: hainantoxin-III and hainantoxin-IV.</title>
        <authorList>
            <person name="Xiao Y."/>
            <person name="Liang S."/>
        </authorList>
    </citation>
    <scope>PROTEIN SEQUENCE OF 50-84</scope>
    <scope>FUNCTION</scope>
    <scope>TOXIN TARGET</scope>
    <scope>SUBCELLULAR LOCATION</scope>
    <scope>TISSUE SPECIFICITY</scope>
    <scope>AMIDATION AT ILE-84</scope>
    <source>
        <tissue>Venom</tissue>
    </source>
</reference>
<reference key="4">
    <citation type="journal article" date="2003" name="Sheng Wu Hua Xue Yu Sheng Wu Wu Li Xue Bao">
        <title>Inhibition of sodium channels in rat dorsal root ganglion neurons by Hainantoxin-IV, a novel spider toxin.</title>
        <authorList>
            <person name="Xiao Y.-C."/>
            <person name="Liang S.-P."/>
        </authorList>
    </citation>
    <scope>FUNCTION</scope>
</reference>
<reference key="5">
    <citation type="journal article" date="2002" name="Sheng Wu Hua Xue Yu Sheng Wu Wu Li Xue Bao">
        <title>Synthesis and oxidative refolding of hainantoxin-IV.</title>
        <authorList>
            <person name="Liu Z.-H."/>
            <person name="Chen P."/>
            <person name="Liang S.-P."/>
        </authorList>
    </citation>
    <scope>SYNTHESIS</scope>
</reference>
<reference key="6">
    <citation type="journal article" date="2005" name="Sheng Wu Gong Cheng Xue Bao">
        <title>Solid-phase synthesis and biological characterization of S12A-HNTX-IV and R29A-HNTX-IV: two mutants of hainantoxin-IV.</title>
        <authorList>
            <person name="Xu X."/>
            <person name="Xiong X."/>
            <person name="Li D.L."/>
            <person name="Xiao Y.C."/>
            <person name="Wang X.C."/>
            <person name="Liang S.P."/>
        </authorList>
    </citation>
    <scope>SYNTHESIS</scope>
    <scope>MUTAGENESIS OF SER-61 AND ARG-78</scope>
</reference>
<reference key="7">
    <citation type="journal article" date="2018" name="J. Biol. Chem.">
        <title>Gating modifier toxins isolated from spider venom: modulation of voltage-gated sodium channels and the role of lipid membranes.</title>
        <authorList>
            <person name="Agwa A.J."/>
            <person name="Peigneur S."/>
            <person name="Chow C.Y."/>
            <person name="Lawrence N."/>
            <person name="Craik D.J."/>
            <person name="Tytgat J."/>
            <person name="King G.F."/>
            <person name="Henriques S.T."/>
            <person name="Schroeder C.I."/>
        </authorList>
    </citation>
    <scope>FUNCTION</scope>
    <scope>SYNTHESIS</scope>
</reference>
<reference key="8">
    <citation type="journal article" date="2004" name="J. Biol. Chem.">
        <title>Structure-activity relationships of hainantoxin-IV and structure determination of active and inactive sodium channel blockers.</title>
        <authorList>
            <person name="Li D."/>
            <person name="Xiao Y."/>
            <person name="Xu X."/>
            <person name="Xiong X."/>
            <person name="Lu S."/>
            <person name="Liu Z."/>
            <person name="Zhu Q."/>
            <person name="Wang M."/>
            <person name="Gu X."/>
            <person name="Liang S."/>
        </authorList>
    </citation>
    <scope>STRUCTURE BY NMR OF 50-84</scope>
    <scope>DISULFIDE BONDS</scope>
    <scope>AMIDATION AT ILE-84</scope>
    <scope>MUTAGENESIS OF SER-61; ARG-75; LYS-76 AND ARG-78</scope>
</reference>
<evidence type="ECO:0000255" key="1"/>
<evidence type="ECO:0000269" key="2">
    <source>
    </source>
</evidence>
<evidence type="ECO:0000269" key="3">
    <source>
    </source>
</evidence>
<evidence type="ECO:0000269" key="4">
    <source>
    </source>
</evidence>
<evidence type="ECO:0000269" key="5">
    <source>
    </source>
</evidence>
<evidence type="ECO:0000269" key="6">
    <source>
    </source>
</evidence>
<evidence type="ECO:0000269" key="7">
    <source>
    </source>
</evidence>
<evidence type="ECO:0000269" key="8">
    <source>
    </source>
</evidence>
<evidence type="ECO:0000303" key="9">
    <source>
    </source>
</evidence>
<evidence type="ECO:0000303" key="10">
    <source>
    </source>
</evidence>
<evidence type="ECO:0000303" key="11">
    <source>
    </source>
</evidence>
<evidence type="ECO:0000303" key="12">
    <source>
    </source>
</evidence>
<evidence type="ECO:0000303" key="13">
    <source>
    </source>
</evidence>
<evidence type="ECO:0000303" key="14">
    <source>
    </source>
</evidence>
<evidence type="ECO:0000303" key="15">
    <source>
    </source>
</evidence>
<evidence type="ECO:0000303" key="16">
    <source>
    </source>
</evidence>
<evidence type="ECO:0000305" key="17"/>
<evidence type="ECO:0000312" key="18">
    <source>
        <dbReference type="PDB" id="1NIY"/>
    </source>
</evidence>
<evidence type="ECO:0000312" key="19">
    <source>
        <dbReference type="PDB" id="1RYG"/>
    </source>
</evidence>
<evidence type="ECO:0000312" key="20">
    <source>
        <dbReference type="PDB" id="1RYV"/>
    </source>
</evidence>
<evidence type="ECO:0007829" key="21">
    <source>
        <dbReference type="PDB" id="1NIY"/>
    </source>
</evidence>
<comment type="function">
    <text evidence="2 3 4 8">Neurotoxin that selectively inhibits neuronal tetrodotoxin-sensitive voltage-gated sodium channels (Nav) (IC(50)=44.6 nM) (PubMed:12518233, PubMed:14512091). It is active on Nav1.2/SCN2A (IC(50)=22.4 nM), Nav1.6/SCN8A (IC(50)=50.1 nM) and Nav1.7/SCN9A (IC(50)=48.9 nM) (PubMed:29703751). It shows low affinity for lipid bilayers (PubMed:29703751).</text>
</comment>
<comment type="subunit">
    <text>Monomer.</text>
</comment>
<comment type="subcellular location">
    <subcellularLocation>
        <location evidence="3 4">Secreted</location>
    </subcellularLocation>
</comment>
<comment type="tissue specificity">
    <text evidence="3 4">Expressed by the venom gland.</text>
</comment>
<comment type="domain">
    <text evidence="5">The presence of a 'disulfide through disulfide knot' structurally defines this protein as a knottin.</text>
</comment>
<comment type="mass spectrometry" mass="3988.58" method="Electrospray" evidence="3"/>
<comment type="toxic dose">
    <text evidence="3">LD(50) is 0.2 +-0.07 mg/kg by intraperitoneal injection into mice.</text>
</comment>
<comment type="miscellaneous">
    <text evidence="2 4">Negative results: does not affect tetrodotoxin-resistant voltage-gated sodium channels or calcium channels.</text>
</comment>
<comment type="similarity">
    <text evidence="17">Belongs to the neurotoxin 10 (Hwtx-1) family. 22 (Htx-4) subfamily.</text>
</comment>
<sequence length="86" mass="9505">MKASMFLALAGLALLFVVCYASESEEKEFSNELLSSVLAVDDNSKGEERECLGFGKGCNPSNDQCCKSSNLVCSRKHRWCKYEIGK</sequence>
<protein>
    <recommendedName>
        <fullName evidence="17">Mu-theraphotoxin-Hhn1b 1</fullName>
        <shortName evidence="17">Mu-TRTX-Hhn1b</shortName>
    </recommendedName>
    <alternativeName>
        <fullName evidence="17">Hainantoxin-4</fullName>
    </alternativeName>
    <alternativeName>
        <fullName evidence="9 10 11 12 13 14 15">Hainantoxin-IV</fullName>
        <shortName evidence="10 11 13 14 15 16">HnTx-IV</shortName>
    </alternativeName>
    <alternativeName>
        <fullName>Peptide F8-18.88</fullName>
    </alternativeName>
</protein>
<accession>D2Y232</accession>
<accession>P83471</accession>
<proteinExistence type="evidence at protein level"/>